<dbReference type="SMR" id="P83004"/>
<dbReference type="Allergome" id="698">
    <property type="allergen name" value="Fag e 1"/>
</dbReference>
<dbReference type="GO" id="GO:0045735">
    <property type="term" value="F:nutrient reservoir activity"/>
    <property type="evidence" value="ECO:0007669"/>
    <property type="project" value="UniProtKB-KW"/>
</dbReference>
<dbReference type="CDD" id="cd02243">
    <property type="entry name" value="cupin_11S_legumin_C"/>
    <property type="match status" value="1"/>
</dbReference>
<dbReference type="FunFam" id="2.60.120.10:FF:000073">
    <property type="entry name" value="Glycinin G1"/>
    <property type="match status" value="1"/>
</dbReference>
<dbReference type="Gene3D" id="2.60.120.10">
    <property type="entry name" value="Jelly Rolls"/>
    <property type="match status" value="1"/>
</dbReference>
<dbReference type="InterPro" id="IPR006044">
    <property type="entry name" value="11S_seedstore_pln"/>
</dbReference>
<dbReference type="InterPro" id="IPR006045">
    <property type="entry name" value="Cupin_1"/>
</dbReference>
<dbReference type="InterPro" id="IPR014710">
    <property type="entry name" value="RmlC-like_jellyroll"/>
</dbReference>
<dbReference type="InterPro" id="IPR011051">
    <property type="entry name" value="RmlC_Cupin_sf"/>
</dbReference>
<dbReference type="InterPro" id="IPR050253">
    <property type="entry name" value="Seed_Storage-Functional"/>
</dbReference>
<dbReference type="PANTHER" id="PTHR31189:SF54">
    <property type="entry name" value="11S GLOBULIN SEED STORAGE PROTEIN 2-LIKE"/>
    <property type="match status" value="1"/>
</dbReference>
<dbReference type="PANTHER" id="PTHR31189">
    <property type="entry name" value="OS03G0336100 PROTEIN-RELATED"/>
    <property type="match status" value="1"/>
</dbReference>
<dbReference type="Pfam" id="PF00190">
    <property type="entry name" value="Cupin_1"/>
    <property type="match status" value="1"/>
</dbReference>
<dbReference type="PRINTS" id="PR00439">
    <property type="entry name" value="11SGLOBULIN"/>
</dbReference>
<dbReference type="SMART" id="SM00835">
    <property type="entry name" value="Cupin_1"/>
    <property type="match status" value="1"/>
</dbReference>
<dbReference type="SUPFAM" id="SSF51182">
    <property type="entry name" value="RmlC-like cupins"/>
    <property type="match status" value="1"/>
</dbReference>
<feature type="chain" id="PRO_0000152877" description="13S globulin basic chain">
    <location>
        <begin position="1"/>
        <end position="194"/>
    </location>
</feature>
<feature type="domain" description="Cupin type-1" evidence="2">
    <location>
        <begin position="13"/>
        <end position="162"/>
    </location>
</feature>
<feature type="disulfide bond" description="Interchain (between basic and acidic chains)" evidence="2">
    <location>
        <begin position="7"/>
        <end status="unknown"/>
    </location>
</feature>
<sequence>GIDENVCTMKLRENIKSPQEADFYNPKAGRITTANSQKLPALRSLQMSAERGFLYSNGIYAPHWNINAHSALYVTRGNAKVQVVGDEGNKVFDDEVKQGQLIIVPQYFAVIKKAGNQGFEYVAFKTNDNAMINPLVGRLSAFRAIPEEVLRSSFQISSEEAEELKYGRQEALLLSEQSQQGKREVADEKERERF</sequence>
<protein>
    <recommendedName>
        <fullName>13S globulin basic chain</fullName>
    </recommendedName>
</protein>
<reference key="1">
    <citation type="journal article" date="2003" name="Phytochemistry">
        <title>Amino acid sequence of the 26 kDa subunit of legumin-type seed storage protein of common buckwheat (Fagopyrum esculentum Moench): molecular characterization and phylogenetic analysis.</title>
        <authorList>
            <person name="Bharali S."/>
            <person name="Chrungoo N.K."/>
        </authorList>
    </citation>
    <scope>PROTEIN SEQUENCE</scope>
    <scope>FUNCTION</scope>
    <scope>TISSUE SPECIFICITY</scope>
    <source>
        <strain>cv. BDS-1354</strain>
        <tissue>Endosperm</tissue>
    </source>
</reference>
<reference key="2">
    <citation type="journal article" date="1997" name="Phytochemistry">
        <title>Amino acid sequence of the basic subunit of 13S globulin of buckwheat.</title>
        <authorList>
            <person name="Rout M.K."/>
            <person name="Chrungoo N.K."/>
            <person name="Rao K.S."/>
        </authorList>
    </citation>
    <scope>PROTEIN SEQUENCE OF 1-17</scope>
</reference>
<proteinExistence type="evidence at protein level"/>
<comment type="function">
    <text evidence="3">Seed storage protein with a relatively high level of Lys and Met.</text>
</comment>
<comment type="subunit">
    <text evidence="1">Hexamer; each subunit is composed of an acidic and a basic chain derived from a single precursor and linked by a disulfide bond.</text>
</comment>
<comment type="tissue specificity">
    <text evidence="3">Cotyledons and endosperm protein bodies.</text>
</comment>
<comment type="similarity">
    <text evidence="4">Belongs to the 11S seed storage protein (globulins) family.</text>
</comment>
<organism evidence="4">
    <name type="scientific">Fagopyrum esculentum</name>
    <name type="common">Common buckwheat</name>
    <name type="synonym">Polygonum fagopyrum</name>
    <dbReference type="NCBI Taxonomy" id="3617"/>
    <lineage>
        <taxon>Eukaryota</taxon>
        <taxon>Viridiplantae</taxon>
        <taxon>Streptophyta</taxon>
        <taxon>Embryophyta</taxon>
        <taxon>Tracheophyta</taxon>
        <taxon>Spermatophyta</taxon>
        <taxon>Magnoliopsida</taxon>
        <taxon>eudicotyledons</taxon>
        <taxon>Gunneridae</taxon>
        <taxon>Pentapetalae</taxon>
        <taxon>Caryophyllales</taxon>
        <taxon>Polygonaceae</taxon>
        <taxon>Polygonoideae</taxon>
        <taxon>Fagopyreae</taxon>
        <taxon>Fagopyrum</taxon>
    </lineage>
</organism>
<evidence type="ECO:0000250" key="1"/>
<evidence type="ECO:0000255" key="2"/>
<evidence type="ECO:0000269" key="3">
    <source>
    </source>
</evidence>
<evidence type="ECO:0000305" key="4"/>
<keyword id="KW-0903">Direct protein sequencing</keyword>
<keyword id="KW-1015">Disulfide bond</keyword>
<keyword id="KW-0708">Seed storage protein</keyword>
<keyword id="KW-0758">Storage protein</keyword>
<name>13SB_FAGES</name>
<accession>P83004</accession>